<proteinExistence type="inferred from homology"/>
<protein>
    <recommendedName>
        <fullName evidence="1">Small ribosomal subunit protein uS8</fullName>
    </recommendedName>
    <alternativeName>
        <fullName evidence="2">30S ribosomal protein S8</fullName>
    </alternativeName>
</protein>
<accession>Q2YAY3</accession>
<gene>
    <name evidence="1" type="primary">rpsH</name>
    <name type="ordered locus">Nmul_A0781</name>
</gene>
<reference key="1">
    <citation type="submission" date="2005-08" db="EMBL/GenBank/DDBJ databases">
        <title>Complete sequence of chromosome 1 of Nitrosospira multiformis ATCC 25196.</title>
        <authorList>
            <person name="Copeland A."/>
            <person name="Lucas S."/>
            <person name="Lapidus A."/>
            <person name="Barry K."/>
            <person name="Detter J.C."/>
            <person name="Glavina T."/>
            <person name="Hammon N."/>
            <person name="Israni S."/>
            <person name="Pitluck S."/>
            <person name="Chain P."/>
            <person name="Malfatti S."/>
            <person name="Shin M."/>
            <person name="Vergez L."/>
            <person name="Schmutz J."/>
            <person name="Larimer F."/>
            <person name="Land M."/>
            <person name="Hauser L."/>
            <person name="Kyrpides N."/>
            <person name="Lykidis A."/>
            <person name="Richardson P."/>
        </authorList>
    </citation>
    <scope>NUCLEOTIDE SEQUENCE [LARGE SCALE GENOMIC DNA]</scope>
    <source>
        <strain>ATCC 25196 / NCIMB 11849 / C 71</strain>
    </source>
</reference>
<sequence length="131" mass="14118">MSMSDPIADMLTRIRNAQLSEKTSVVMPASKLKAAIAQVLKDEGYVEDFIVHEAGGKSILDISLKYYAGRPVIERIERVSRPGLRIYKGSNKLPNVMNGLGVAIVSTSKGVMTERKARANGVGGEVLCIVA</sequence>
<comment type="function">
    <text evidence="1">One of the primary rRNA binding proteins, it binds directly to 16S rRNA central domain where it helps coordinate assembly of the platform of the 30S subunit.</text>
</comment>
<comment type="subunit">
    <text evidence="1">Part of the 30S ribosomal subunit. Contacts proteins S5 and S12.</text>
</comment>
<comment type="similarity">
    <text evidence="1">Belongs to the universal ribosomal protein uS8 family.</text>
</comment>
<evidence type="ECO:0000255" key="1">
    <source>
        <dbReference type="HAMAP-Rule" id="MF_01302"/>
    </source>
</evidence>
<evidence type="ECO:0000305" key="2"/>
<organism>
    <name type="scientific">Nitrosospira multiformis (strain ATCC 25196 / NCIMB 11849 / C 71)</name>
    <dbReference type="NCBI Taxonomy" id="323848"/>
    <lineage>
        <taxon>Bacteria</taxon>
        <taxon>Pseudomonadati</taxon>
        <taxon>Pseudomonadota</taxon>
        <taxon>Betaproteobacteria</taxon>
        <taxon>Nitrosomonadales</taxon>
        <taxon>Nitrosomonadaceae</taxon>
        <taxon>Nitrosospira</taxon>
    </lineage>
</organism>
<feature type="chain" id="PRO_0000228863" description="Small ribosomal subunit protein uS8">
    <location>
        <begin position="1"/>
        <end position="131"/>
    </location>
</feature>
<keyword id="KW-1185">Reference proteome</keyword>
<keyword id="KW-0687">Ribonucleoprotein</keyword>
<keyword id="KW-0689">Ribosomal protein</keyword>
<keyword id="KW-0694">RNA-binding</keyword>
<keyword id="KW-0699">rRNA-binding</keyword>
<dbReference type="EMBL" id="CP000103">
    <property type="protein sequence ID" value="ABB74088.1"/>
    <property type="molecule type" value="Genomic_DNA"/>
</dbReference>
<dbReference type="RefSeq" id="WP_011380137.1">
    <property type="nucleotide sequence ID" value="NC_007614.1"/>
</dbReference>
<dbReference type="SMR" id="Q2YAY3"/>
<dbReference type="STRING" id="323848.Nmul_A0781"/>
<dbReference type="KEGG" id="nmu:Nmul_A0781"/>
<dbReference type="eggNOG" id="COG0096">
    <property type="taxonomic scope" value="Bacteria"/>
</dbReference>
<dbReference type="HOGENOM" id="CLU_098428_0_0_4"/>
<dbReference type="OrthoDB" id="9802617at2"/>
<dbReference type="Proteomes" id="UP000002718">
    <property type="component" value="Chromosome"/>
</dbReference>
<dbReference type="GO" id="GO:1990904">
    <property type="term" value="C:ribonucleoprotein complex"/>
    <property type="evidence" value="ECO:0007669"/>
    <property type="project" value="UniProtKB-KW"/>
</dbReference>
<dbReference type="GO" id="GO:0005840">
    <property type="term" value="C:ribosome"/>
    <property type="evidence" value="ECO:0007669"/>
    <property type="project" value="UniProtKB-KW"/>
</dbReference>
<dbReference type="GO" id="GO:0019843">
    <property type="term" value="F:rRNA binding"/>
    <property type="evidence" value="ECO:0007669"/>
    <property type="project" value="UniProtKB-UniRule"/>
</dbReference>
<dbReference type="GO" id="GO:0003735">
    <property type="term" value="F:structural constituent of ribosome"/>
    <property type="evidence" value="ECO:0007669"/>
    <property type="project" value="InterPro"/>
</dbReference>
<dbReference type="GO" id="GO:0006412">
    <property type="term" value="P:translation"/>
    <property type="evidence" value="ECO:0007669"/>
    <property type="project" value="UniProtKB-UniRule"/>
</dbReference>
<dbReference type="FunFam" id="3.30.1370.30:FF:000002">
    <property type="entry name" value="30S ribosomal protein S8"/>
    <property type="match status" value="1"/>
</dbReference>
<dbReference type="FunFam" id="3.30.1490.10:FF:000001">
    <property type="entry name" value="30S ribosomal protein S8"/>
    <property type="match status" value="1"/>
</dbReference>
<dbReference type="Gene3D" id="3.30.1370.30">
    <property type="match status" value="1"/>
</dbReference>
<dbReference type="Gene3D" id="3.30.1490.10">
    <property type="match status" value="1"/>
</dbReference>
<dbReference type="HAMAP" id="MF_01302_B">
    <property type="entry name" value="Ribosomal_uS8_B"/>
    <property type="match status" value="1"/>
</dbReference>
<dbReference type="InterPro" id="IPR000630">
    <property type="entry name" value="Ribosomal_uS8"/>
</dbReference>
<dbReference type="InterPro" id="IPR047863">
    <property type="entry name" value="Ribosomal_uS8_CS"/>
</dbReference>
<dbReference type="InterPro" id="IPR035987">
    <property type="entry name" value="Ribosomal_uS8_sf"/>
</dbReference>
<dbReference type="NCBIfam" id="NF001109">
    <property type="entry name" value="PRK00136.1"/>
    <property type="match status" value="1"/>
</dbReference>
<dbReference type="PANTHER" id="PTHR11758">
    <property type="entry name" value="40S RIBOSOMAL PROTEIN S15A"/>
    <property type="match status" value="1"/>
</dbReference>
<dbReference type="Pfam" id="PF00410">
    <property type="entry name" value="Ribosomal_S8"/>
    <property type="match status" value="1"/>
</dbReference>
<dbReference type="SUPFAM" id="SSF56047">
    <property type="entry name" value="Ribosomal protein S8"/>
    <property type="match status" value="1"/>
</dbReference>
<dbReference type="PROSITE" id="PS00053">
    <property type="entry name" value="RIBOSOMAL_S8"/>
    <property type="match status" value="1"/>
</dbReference>
<name>RS8_NITMU</name>